<keyword id="KW-0002">3D-structure</keyword>
<keyword id="KW-0963">Cytoplasm</keyword>
<keyword id="KW-0903">Direct protein sequencing</keyword>
<keyword id="KW-0324">Glycolysis</keyword>
<keyword id="KW-0456">Lyase</keyword>
<keyword id="KW-0460">Magnesium</keyword>
<keyword id="KW-0479">Metal-binding</keyword>
<keyword id="KW-0597">Phosphoprotein</keyword>
<keyword id="KW-1185">Reference proteome</keyword>
<keyword id="KW-0964">Secreted</keyword>
<keyword id="KW-0749">Sporulation</keyword>
<dbReference type="EC" id="4.2.1.11" evidence="2 10"/>
<dbReference type="EMBL" id="L29475">
    <property type="protein sequence ID" value="AAA21681.1"/>
    <property type="molecule type" value="Genomic_DNA"/>
</dbReference>
<dbReference type="EMBL" id="AL009126">
    <property type="protein sequence ID" value="CAB15395.1"/>
    <property type="molecule type" value="Genomic_DNA"/>
</dbReference>
<dbReference type="PIR" id="B69620">
    <property type="entry name" value="B69620"/>
</dbReference>
<dbReference type="RefSeq" id="NP_391270.1">
    <property type="nucleotide sequence ID" value="NC_000964.3"/>
</dbReference>
<dbReference type="RefSeq" id="WP_003228333.1">
    <property type="nucleotide sequence ID" value="NZ_OZ025638.1"/>
</dbReference>
<dbReference type="PDB" id="4A3R">
    <property type="method" value="X-ray"/>
    <property type="resolution" value="2.20 A"/>
    <property type="chains" value="A/B/C/D=1-430"/>
</dbReference>
<dbReference type="PDB" id="7XML">
    <property type="method" value="EM"/>
    <property type="resolution" value="3.20 A"/>
    <property type="chains" value="A/B=1-430"/>
</dbReference>
<dbReference type="PDBsum" id="4A3R"/>
<dbReference type="PDBsum" id="7XML"/>
<dbReference type="EMDB" id="EMD-33300"/>
<dbReference type="SMR" id="P37869"/>
<dbReference type="FunCoup" id="P37869">
    <property type="interactions" value="539"/>
</dbReference>
<dbReference type="IntAct" id="P37869">
    <property type="interactions" value="2"/>
</dbReference>
<dbReference type="MINT" id="P37869"/>
<dbReference type="STRING" id="224308.BSU33900"/>
<dbReference type="iPTMnet" id="P37869"/>
<dbReference type="jPOST" id="P37869"/>
<dbReference type="PaxDb" id="224308-BSU33900"/>
<dbReference type="EnsemblBacteria" id="CAB15395">
    <property type="protein sequence ID" value="CAB15395"/>
    <property type="gene ID" value="BSU_33900"/>
</dbReference>
<dbReference type="GeneID" id="938641"/>
<dbReference type="KEGG" id="bsu:BSU33900"/>
<dbReference type="PATRIC" id="fig|224308.179.peg.3675"/>
<dbReference type="eggNOG" id="COG0148">
    <property type="taxonomic scope" value="Bacteria"/>
</dbReference>
<dbReference type="InParanoid" id="P37869"/>
<dbReference type="OrthoDB" id="9804716at2"/>
<dbReference type="PhylomeDB" id="P37869"/>
<dbReference type="BioCyc" id="BSUB:BSU33900-MONOMER"/>
<dbReference type="BRENDA" id="4.2.1.11">
    <property type="organism ID" value="658"/>
</dbReference>
<dbReference type="SABIO-RK" id="P37869"/>
<dbReference type="UniPathway" id="UPA00109">
    <property type="reaction ID" value="UER00187"/>
</dbReference>
<dbReference type="EvolutionaryTrace" id="P37869"/>
<dbReference type="Proteomes" id="UP000001570">
    <property type="component" value="Chromosome"/>
</dbReference>
<dbReference type="GO" id="GO:0009986">
    <property type="term" value="C:cell surface"/>
    <property type="evidence" value="ECO:0007669"/>
    <property type="project" value="UniProtKB-SubCell"/>
</dbReference>
<dbReference type="GO" id="GO:0005576">
    <property type="term" value="C:extracellular region"/>
    <property type="evidence" value="ECO:0007669"/>
    <property type="project" value="UniProtKB-SubCell"/>
</dbReference>
<dbReference type="GO" id="GO:0000015">
    <property type="term" value="C:phosphopyruvate hydratase complex"/>
    <property type="evidence" value="ECO:0000318"/>
    <property type="project" value="GO_Central"/>
</dbReference>
<dbReference type="GO" id="GO:0000287">
    <property type="term" value="F:magnesium ion binding"/>
    <property type="evidence" value="ECO:0007669"/>
    <property type="project" value="UniProtKB-UniRule"/>
</dbReference>
<dbReference type="GO" id="GO:0004634">
    <property type="term" value="F:phosphopyruvate hydratase activity"/>
    <property type="evidence" value="ECO:0000318"/>
    <property type="project" value="GO_Central"/>
</dbReference>
<dbReference type="GO" id="GO:0006096">
    <property type="term" value="P:glycolytic process"/>
    <property type="evidence" value="ECO:0000318"/>
    <property type="project" value="GO_Central"/>
</dbReference>
<dbReference type="GO" id="GO:0030435">
    <property type="term" value="P:sporulation resulting in formation of a cellular spore"/>
    <property type="evidence" value="ECO:0007669"/>
    <property type="project" value="UniProtKB-KW"/>
</dbReference>
<dbReference type="CDD" id="cd03313">
    <property type="entry name" value="enolase"/>
    <property type="match status" value="1"/>
</dbReference>
<dbReference type="FunFam" id="3.20.20.120:FF:000001">
    <property type="entry name" value="Enolase"/>
    <property type="match status" value="1"/>
</dbReference>
<dbReference type="FunFam" id="3.30.390.10:FF:000001">
    <property type="entry name" value="Enolase"/>
    <property type="match status" value="1"/>
</dbReference>
<dbReference type="Gene3D" id="3.20.20.120">
    <property type="entry name" value="Enolase-like C-terminal domain"/>
    <property type="match status" value="1"/>
</dbReference>
<dbReference type="Gene3D" id="3.30.390.10">
    <property type="entry name" value="Enolase-like, N-terminal domain"/>
    <property type="match status" value="1"/>
</dbReference>
<dbReference type="HAMAP" id="MF_00318">
    <property type="entry name" value="Enolase"/>
    <property type="match status" value="1"/>
</dbReference>
<dbReference type="InterPro" id="IPR000941">
    <property type="entry name" value="Enolase"/>
</dbReference>
<dbReference type="InterPro" id="IPR036849">
    <property type="entry name" value="Enolase-like_C_sf"/>
</dbReference>
<dbReference type="InterPro" id="IPR029017">
    <property type="entry name" value="Enolase-like_N"/>
</dbReference>
<dbReference type="InterPro" id="IPR020810">
    <property type="entry name" value="Enolase_C"/>
</dbReference>
<dbReference type="InterPro" id="IPR020809">
    <property type="entry name" value="Enolase_CS"/>
</dbReference>
<dbReference type="InterPro" id="IPR020811">
    <property type="entry name" value="Enolase_N"/>
</dbReference>
<dbReference type="NCBIfam" id="TIGR01060">
    <property type="entry name" value="eno"/>
    <property type="match status" value="1"/>
</dbReference>
<dbReference type="PANTHER" id="PTHR11902">
    <property type="entry name" value="ENOLASE"/>
    <property type="match status" value="1"/>
</dbReference>
<dbReference type="PANTHER" id="PTHR11902:SF1">
    <property type="entry name" value="ENOLASE"/>
    <property type="match status" value="1"/>
</dbReference>
<dbReference type="Pfam" id="PF00113">
    <property type="entry name" value="Enolase_C"/>
    <property type="match status" value="1"/>
</dbReference>
<dbReference type="Pfam" id="PF03952">
    <property type="entry name" value="Enolase_N"/>
    <property type="match status" value="1"/>
</dbReference>
<dbReference type="PIRSF" id="PIRSF001400">
    <property type="entry name" value="Enolase"/>
    <property type="match status" value="1"/>
</dbReference>
<dbReference type="PRINTS" id="PR00148">
    <property type="entry name" value="ENOLASE"/>
</dbReference>
<dbReference type="SFLD" id="SFLDS00001">
    <property type="entry name" value="Enolase"/>
    <property type="match status" value="1"/>
</dbReference>
<dbReference type="SFLD" id="SFLDF00002">
    <property type="entry name" value="enolase"/>
    <property type="match status" value="1"/>
</dbReference>
<dbReference type="SMART" id="SM01192">
    <property type="entry name" value="Enolase_C"/>
    <property type="match status" value="1"/>
</dbReference>
<dbReference type="SMART" id="SM01193">
    <property type="entry name" value="Enolase_N"/>
    <property type="match status" value="1"/>
</dbReference>
<dbReference type="SUPFAM" id="SSF51604">
    <property type="entry name" value="Enolase C-terminal domain-like"/>
    <property type="match status" value="1"/>
</dbReference>
<dbReference type="SUPFAM" id="SSF54826">
    <property type="entry name" value="Enolase N-terminal domain-like"/>
    <property type="match status" value="1"/>
</dbReference>
<dbReference type="PROSITE" id="PS00164">
    <property type="entry name" value="ENOLASE"/>
    <property type="match status" value="1"/>
</dbReference>
<evidence type="ECO:0000250" key="1">
    <source>
        <dbReference type="UniProtKB" id="P0A6P9"/>
    </source>
</evidence>
<evidence type="ECO:0000255" key="2">
    <source>
        <dbReference type="HAMAP-Rule" id="MF_00318"/>
    </source>
</evidence>
<evidence type="ECO:0000269" key="3">
    <source>
    </source>
</evidence>
<evidence type="ECO:0000269" key="4">
    <source>
    </source>
</evidence>
<evidence type="ECO:0000269" key="5">
    <source>
    </source>
</evidence>
<evidence type="ECO:0000269" key="6">
    <source>
    </source>
</evidence>
<evidence type="ECO:0000269" key="7">
    <source>
    </source>
</evidence>
<evidence type="ECO:0000269" key="8">
    <source>
    </source>
</evidence>
<evidence type="ECO:0000269" key="9">
    <source>
    </source>
</evidence>
<evidence type="ECO:0000269" key="10">
    <source>
    </source>
</evidence>
<evidence type="ECO:0000303" key="11">
    <source>
    </source>
</evidence>
<evidence type="ECO:0000305" key="12"/>
<evidence type="ECO:0000305" key="13">
    <source>
    </source>
</evidence>
<evidence type="ECO:0007829" key="14">
    <source>
        <dbReference type="PDB" id="4A3R"/>
    </source>
</evidence>
<evidence type="ECO:0007829" key="15">
    <source>
        <dbReference type="PDB" id="7XML"/>
    </source>
</evidence>
<proteinExistence type="evidence at protein level"/>
<comment type="function">
    <text evidence="2 10">Catalyzes the reversible conversion of 2-phosphoglycerate (2-PG) into phosphoenolpyruvate (PEP) (PubMed:9988532). It is essential for the degradation of carbohydrates via glycolysis.</text>
</comment>
<comment type="function">
    <text evidence="5 6 8">A component of the RNA degradosome, a multi-enzyme complex involved in RNA processing and messenger RNA degradation (PubMed:19193632, PubMed:21803996, PubMed:22198292).</text>
</comment>
<comment type="catalytic activity">
    <reaction evidence="2 10">
        <text>(2R)-2-phosphoglycerate = phosphoenolpyruvate + H2O</text>
        <dbReference type="Rhea" id="RHEA:10164"/>
        <dbReference type="ChEBI" id="CHEBI:15377"/>
        <dbReference type="ChEBI" id="CHEBI:58289"/>
        <dbReference type="ChEBI" id="CHEBI:58702"/>
        <dbReference type="EC" id="4.2.1.11"/>
    </reaction>
    <physiologicalReaction direction="left-to-right" evidence="10">
        <dbReference type="Rhea" id="RHEA:10165"/>
    </physiologicalReaction>
</comment>
<comment type="cofactor">
    <cofactor evidence="2 12">
        <name>Mg(2+)</name>
        <dbReference type="ChEBI" id="CHEBI:18420"/>
    </cofactor>
    <text evidence="2">Binds a second Mg(2+) ion via substrate during catalysis.</text>
</comment>
<comment type="activity regulation">
    <text evidence="8 13">Covalent binding to the substrate (probably 2-PG) at Lys-339 of a small fraction of enolase causes inactivation of the enzyme, and possibly serves as a signal for the export of the protein (PubMed:15003462). Citrate acts as a non-competitive inhibitor for both forward and reverse reactions, probably by chelating Mg(2+) (PubMed:22198292).</text>
</comment>
<comment type="biophysicochemical properties">
    <kinetics>
        <KM evidence="10">0.67 mM for 2-phospho-D-glycerate</KM>
        <KM evidence="8">0.44 uM for 2-phospho-D-glycerate</KM>
    </kinetics>
    <phDependence>
        <text evidence="10">Optimum pH is 8.1-8.2 for the forward reaction (2-PG substrate) (PubMed:9988532).</text>
    </phDependence>
</comment>
<comment type="pathway">
    <text evidence="2">Carbohydrate degradation; glycolysis; pyruvate from D-glyceraldehyde 3-phosphate: step 4/5.</text>
</comment>
<comment type="subunit">
    <text evidence="5 6 8 10">Homooctamer (PubMed:9988532). Component of the RNA degradosome complex composed of rny, rnjA, rnjB, pnp, pfkA and eno (PubMed:19193632, PubMed:21803996, PubMed:22198292) (although rnjA and rnjB's presence is controversial).</text>
</comment>
<comment type="interaction">
    <interactant intactId="EBI-6415666">
        <id>P37869</id>
    </interactant>
    <interactant intactId="EBI-6415578">
        <id>O31774</id>
        <label>rny</label>
    </interactant>
    <organismsDiffer>false</organismsDiffer>
    <experiments>2</experiments>
</comment>
<comment type="subcellular location">
    <subcellularLocation>
        <location evidence="2 7 9">Cytoplasm</location>
    </subcellularLocation>
    <subcellularLocation>
        <location evidence="2 7 9">Secreted</location>
    </subcellularLocation>
    <subcellularLocation>
        <location evidence="2">Cell surface</location>
    </subcellularLocation>
    <text evidence="1 7 9">Present in the cytoplasm early in growth, as cells become stationary protein also accumulates in the medium; the N-terminus of the protein is not processed (PubMed:21856851, PubMed:24642254). An internal hydrophobic region is required for secretion, its replacement by another alpha-helix is not secreted (PubMed:21856851, PubMed:24642254). Also secreted in E.coli (PubMed:24642254). Fractions of enolase are present in both the cytoplasm and on the cell surface. The export of enolase possibly depends on the covalent binding to the substrate at Lys-339; once secreted, it remains attached to the cell surface (By similarity).</text>
</comment>
<comment type="domain">
    <text evidence="9">The N-terminus (residues 1-140) is sufficient to target GFP for secretion in vivo (PubMed:24642254).</text>
</comment>
<comment type="PTM">
    <text evidence="3 4">Phosphorylated during sporulation.</text>
</comment>
<comment type="similarity">
    <text evidence="2">Belongs to the enolase family.</text>
</comment>
<accession>P37869</accession>
<accession>O32249</accession>
<protein>
    <recommendedName>
        <fullName evidence="2 11">Enolase</fullName>
        <ecNumber evidence="2 10">4.2.1.11</ecNumber>
    </recommendedName>
    <alternativeName>
        <fullName evidence="2">2-phospho-D-glycerate hydro-lyase</fullName>
    </alternativeName>
    <alternativeName>
        <fullName evidence="2">2-phosphoglycerate dehydratase</fullName>
    </alternativeName>
</protein>
<reference key="1">
    <citation type="journal article" date="1994" name="J. Bacteriol.">
        <title>Cloning and nucleotide sequences of the genes encoding triose phosphate isomerase, phosphoglycerate mutase, and enolase from Bacillus subtilis.</title>
        <authorList>
            <person name="Leyva-Vazquez M.A."/>
            <person name="Setlow P."/>
        </authorList>
    </citation>
    <scope>NUCLEOTIDE SEQUENCE [GENOMIC DNA]</scope>
    <source>
        <strain>168 / Marburg / ATCC 6051 / DSM 10 / JCM 1465 / NBRC 13719 / NCIMB 3610 / NRRL NRS-744 / VKM B-501</strain>
    </source>
</reference>
<reference key="2">
    <citation type="journal article" date="1997" name="Nature">
        <title>The complete genome sequence of the Gram-positive bacterium Bacillus subtilis.</title>
        <authorList>
            <person name="Kunst F."/>
            <person name="Ogasawara N."/>
            <person name="Moszer I."/>
            <person name="Albertini A.M."/>
            <person name="Alloni G."/>
            <person name="Azevedo V."/>
            <person name="Bertero M.G."/>
            <person name="Bessieres P."/>
            <person name="Bolotin A."/>
            <person name="Borchert S."/>
            <person name="Borriss R."/>
            <person name="Boursier L."/>
            <person name="Brans A."/>
            <person name="Braun M."/>
            <person name="Brignell S.C."/>
            <person name="Bron S."/>
            <person name="Brouillet S."/>
            <person name="Bruschi C.V."/>
            <person name="Caldwell B."/>
            <person name="Capuano V."/>
            <person name="Carter N.M."/>
            <person name="Choi S.-K."/>
            <person name="Codani J.-J."/>
            <person name="Connerton I.F."/>
            <person name="Cummings N.J."/>
            <person name="Daniel R.A."/>
            <person name="Denizot F."/>
            <person name="Devine K.M."/>
            <person name="Duesterhoeft A."/>
            <person name="Ehrlich S.D."/>
            <person name="Emmerson P.T."/>
            <person name="Entian K.-D."/>
            <person name="Errington J."/>
            <person name="Fabret C."/>
            <person name="Ferrari E."/>
            <person name="Foulger D."/>
            <person name="Fritz C."/>
            <person name="Fujita M."/>
            <person name="Fujita Y."/>
            <person name="Fuma S."/>
            <person name="Galizzi A."/>
            <person name="Galleron N."/>
            <person name="Ghim S.-Y."/>
            <person name="Glaser P."/>
            <person name="Goffeau A."/>
            <person name="Golightly E.J."/>
            <person name="Grandi G."/>
            <person name="Guiseppi G."/>
            <person name="Guy B.J."/>
            <person name="Haga K."/>
            <person name="Haiech J."/>
            <person name="Harwood C.R."/>
            <person name="Henaut A."/>
            <person name="Hilbert H."/>
            <person name="Holsappel S."/>
            <person name="Hosono S."/>
            <person name="Hullo M.-F."/>
            <person name="Itaya M."/>
            <person name="Jones L.-M."/>
            <person name="Joris B."/>
            <person name="Karamata D."/>
            <person name="Kasahara Y."/>
            <person name="Klaerr-Blanchard M."/>
            <person name="Klein C."/>
            <person name="Kobayashi Y."/>
            <person name="Koetter P."/>
            <person name="Koningstein G."/>
            <person name="Krogh S."/>
            <person name="Kumano M."/>
            <person name="Kurita K."/>
            <person name="Lapidus A."/>
            <person name="Lardinois S."/>
            <person name="Lauber J."/>
            <person name="Lazarevic V."/>
            <person name="Lee S.-M."/>
            <person name="Levine A."/>
            <person name="Liu H."/>
            <person name="Masuda S."/>
            <person name="Mauel C."/>
            <person name="Medigue C."/>
            <person name="Medina N."/>
            <person name="Mellado R.P."/>
            <person name="Mizuno M."/>
            <person name="Moestl D."/>
            <person name="Nakai S."/>
            <person name="Noback M."/>
            <person name="Noone D."/>
            <person name="O'Reilly M."/>
            <person name="Ogawa K."/>
            <person name="Ogiwara A."/>
            <person name="Oudega B."/>
            <person name="Park S.-H."/>
            <person name="Parro V."/>
            <person name="Pohl T.M."/>
            <person name="Portetelle D."/>
            <person name="Porwollik S."/>
            <person name="Prescott A.M."/>
            <person name="Presecan E."/>
            <person name="Pujic P."/>
            <person name="Purnelle B."/>
            <person name="Rapoport G."/>
            <person name="Rey M."/>
            <person name="Reynolds S."/>
            <person name="Rieger M."/>
            <person name="Rivolta C."/>
            <person name="Rocha E."/>
            <person name="Roche B."/>
            <person name="Rose M."/>
            <person name="Sadaie Y."/>
            <person name="Sato T."/>
            <person name="Scanlan E."/>
            <person name="Schleich S."/>
            <person name="Schroeter R."/>
            <person name="Scoffone F."/>
            <person name="Sekiguchi J."/>
            <person name="Sekowska A."/>
            <person name="Seror S.J."/>
            <person name="Serror P."/>
            <person name="Shin B.-S."/>
            <person name="Soldo B."/>
            <person name="Sorokin A."/>
            <person name="Tacconi E."/>
            <person name="Takagi T."/>
            <person name="Takahashi H."/>
            <person name="Takemaru K."/>
            <person name="Takeuchi M."/>
            <person name="Tamakoshi A."/>
            <person name="Tanaka T."/>
            <person name="Terpstra P."/>
            <person name="Tognoni A."/>
            <person name="Tosato V."/>
            <person name="Uchiyama S."/>
            <person name="Vandenbol M."/>
            <person name="Vannier F."/>
            <person name="Vassarotti A."/>
            <person name="Viari A."/>
            <person name="Wambutt R."/>
            <person name="Wedler E."/>
            <person name="Wedler H."/>
            <person name="Weitzenegger T."/>
            <person name="Winters P."/>
            <person name="Wipat A."/>
            <person name="Yamamoto H."/>
            <person name="Yamane K."/>
            <person name="Yasumoto K."/>
            <person name="Yata K."/>
            <person name="Yoshida K."/>
            <person name="Yoshikawa H.-F."/>
            <person name="Zumstein E."/>
            <person name="Yoshikawa H."/>
            <person name="Danchin A."/>
        </authorList>
    </citation>
    <scope>NUCLEOTIDE SEQUENCE [LARGE SCALE GENOMIC DNA]</scope>
    <source>
        <strain>168</strain>
    </source>
</reference>
<reference key="3">
    <citation type="journal article" date="1992" name="J. Bacteriol.">
        <title>Identification of proteins phosphorylated by ATP during sporulation of Bacillus subtilis.</title>
        <authorList>
            <person name="Mitchell C."/>
            <person name="Morris P.W."/>
            <person name="Vary J.C."/>
        </authorList>
    </citation>
    <scope>PROTEIN SEQUENCE OF 2-10</scope>
    <scope>PHOSPHORYLATION</scope>
    <source>
        <strain>168 / DB100</strain>
    </source>
</reference>
<reference key="4">
    <citation type="journal article" date="1998" name="J. Protein Chem.">
        <title>A model of the quaternary structure of enolases, based on structural and evolutionary analysis of the octameric enolase from Bacillus subtilis.</title>
        <authorList>
            <person name="Brown C.K."/>
            <person name="Kuhlman P.L."/>
            <person name="Mattingly S."/>
            <person name="Slates K."/>
            <person name="Calie P.J."/>
            <person name="Farrar W.W."/>
        </authorList>
    </citation>
    <scope>FUNCTION</scope>
    <scope>CATALYTIC ACTIVITY</scope>
    <scope>BIOPHYSICOCHEMICAL PROPERTIES</scope>
    <scope>SUBUNIT</scope>
</reference>
<reference key="5">
    <citation type="journal article" date="2004" name="J. Mol. Biol.">
        <title>Is 2-phosphoglycerate-dependent automodification of bacterial enolases implicated in their export?</title>
        <authorList>
            <person name="Boeel G."/>
            <person name="Pichereau V."/>
            <person name="Mijakovic I."/>
            <person name="Maze A."/>
            <person name="Poncet S."/>
            <person name="Gillet S."/>
            <person name="Giard J.-C."/>
            <person name="Hartke A."/>
            <person name="Auffray Y."/>
            <person name="Deutscher J."/>
        </authorList>
    </citation>
    <scope>PROBABLE SUBSTRATE BINDING AT LYS-339</scope>
    <scope>PROBABLE ACTIVITY REGULATION</scope>
    <source>
        <strain>168</strain>
    </source>
</reference>
<reference key="6">
    <citation type="journal article" date="2007" name="Mol. Cell. Proteomics">
        <title>The serine/threonine/tyrosine phosphoproteome of the model bacterium Bacillus subtilis.</title>
        <authorList>
            <person name="Macek B."/>
            <person name="Mijakovic I."/>
            <person name="Olsen J.V."/>
            <person name="Gnad F."/>
            <person name="Kumar C."/>
            <person name="Jensen P.R."/>
            <person name="Mann M."/>
        </authorList>
    </citation>
    <scope>PHOSPHORYLATION [LARGE SCALE ANALYSIS] AT THR-141; SER-259; TYR-281 AND SER-325</scope>
    <scope>IDENTIFICATION BY MASS SPECTROMETRY</scope>
    <source>
        <strain>168</strain>
    </source>
</reference>
<reference key="7">
    <citation type="journal article" date="2009" name="Mol. Cell. Proteomics">
        <title>Novel activities of glycolytic enzymes in Bacillus subtilis: interactions with essential proteins involved in mRNA processing.</title>
        <authorList>
            <person name="Commichau F.M."/>
            <person name="Rothe F.M."/>
            <person name="Herzberg C."/>
            <person name="Wagner E."/>
            <person name="Hellwig D."/>
            <person name="Lehnik-Habrink M."/>
            <person name="Hammer E."/>
            <person name="Volker U."/>
            <person name="Stulke J."/>
        </authorList>
    </citation>
    <scope>SUBUNIT</scope>
    <scope>SUBUNIT OF RNA DEGRADOSOME</scope>
    <source>
        <strain>168</strain>
    </source>
</reference>
<reference key="8">
    <citation type="journal article" date="2011" name="J. Bacteriol.">
        <title>RNase Y in Bacillus subtilis: a natively disordered protein that is the functional equivalent of RNase E from Escherichia coli.</title>
        <authorList>
            <person name="Lehnik-Habrink M."/>
            <person name="Newman J."/>
            <person name="Rothe F.M."/>
            <person name="Solovyova A.S."/>
            <person name="Rodrigues C."/>
            <person name="Herzberg C."/>
            <person name="Commichau F.M."/>
            <person name="Lewis R.J."/>
            <person name="Stulke J."/>
        </authorList>
    </citation>
    <scope>INTERACTION WITH RNY</scope>
    <scope>SUBUNIT</scope>
    <scope>SUBUNIT OF RNA DEGRADOSOME</scope>
    <source>
        <strain>168</strain>
    </source>
</reference>
<reference key="9">
    <citation type="journal article" date="2011" name="J. Bacteriol.">
        <title>Nonclassical protein secretion by Bacillus subtilis in the stationary phase is not due to cell lysis.</title>
        <authorList>
            <person name="Yang C.K."/>
            <person name="Ewis H.E."/>
            <person name="Zhang X."/>
            <person name="Lu C.D."/>
            <person name="Hu H.J."/>
            <person name="Pan Y."/>
            <person name="Abdelal A.T."/>
            <person name="Tai P.C."/>
        </authorList>
    </citation>
    <scope>PROTEIN SEQUENCE OF N-TERMINUS</scope>
    <scope>SUBCELLULAR LOCATION</scope>
    <scope>MUTAGENESIS OF 102-ASN--LEU-126 AND 110-ALA--CYS-118</scope>
    <source>
        <strain>168 / WB600BHM</strain>
    </source>
</reference>
<reference key="10">
    <citation type="journal article" date="2014" name="Biochem. Biophys. Res. Commun.">
        <title>An internal hydrophobic helical domain of Bacillus subtilis enolase is essential but not sufficient as a non-cleavable signal for its secretion.</title>
        <authorList>
            <person name="Yang C.K."/>
            <person name="Zhang X.Z."/>
            <person name="Lu C.D."/>
            <person name="Tai P.C."/>
        </authorList>
    </citation>
    <scope>SECRETION SIGNAL</scope>
    <scope>SUBCELLULAR LOCATION</scope>
    <scope>DOMAIN</scope>
    <scope>MUTAGENESIS OF 103-LYS--LYS-105; 108-ALA-ASN-109; 110-ALA--LEU-112; 114-VAL-SER-115; 116-MET--CYS-118; 119-ALA--ALA-121; 122-ALA--ASP-124 AND 125-PHE--GLN-127</scope>
    <source>
        <strain>168 / WB600BHM</strain>
    </source>
</reference>
<reference key="11">
    <citation type="journal article" date="2012" name="J. Mol. Biol.">
        <title>Dissection of the network of interactions that links RNA processing with glycolysis in the Bacillus subtilis degradosome.</title>
        <authorList>
            <person name="Newman J.A."/>
            <person name="Hewitt L."/>
            <person name="Rodrigues C."/>
            <person name="Solovyova A.S."/>
            <person name="Harwood C.R."/>
            <person name="Lewis R.J."/>
        </authorList>
    </citation>
    <scope>X-RAY CRYSTALLOGRAPHY (2.2 ANGSTROMS)</scope>
    <scope>POSSIBLE COFACTOR</scope>
    <scope>ACTIVITY REGULATION</scope>
    <scope>BIOPHYSICOCHEMICAL PROPERTIES</scope>
    <scope>INTERACTION WITH PFKA; RNY</scope>
    <scope>SUBUNIT</scope>
    <scope>SUBUNIT OF RNA DEGRADOSOME</scope>
    <source>
        <strain>168</strain>
    </source>
</reference>
<name>ENO_BACSU</name>
<sequence>MPYIVDVYAREVLDSRGNPTVEVEVYTETGAFGRALVPSGASTGEYEAVELRDGDKDRYLGKGVLTAVNNVNEIIAPELLGFDVTEQNAIDQLLIELDGTENKGKLGANAILGVSMACARAAADFLQIPLYQYLGGFNSKTLPVPMMNIVNGGEHADNNVDIQEFMIMPVGAPNFREALRMGAQIFHSLKSVLSAKGLNTAVGDEGGFAPNLGSNEEALQTIVEAIEKAGFKPGEEVKLAMDAASSEFYNKEDGKYHLSGEGVVKTSAEMVDWYEELVSKYPIISIEDGLDENDWEGHKLLTERLGKKVQLVGDDLFVTNTKKLSEGIKNGVGNSILIKVNQIGTLTETFDAIEMAKRAGYTAVISHRSGETEDSTIADIAVATNAGQIKTGAPSRTDRVAKYNQLLRIEDQLAETAQYHGINSFYNLNK</sequence>
<feature type="initiator methionine" description="Removed" evidence="3">
    <location>
        <position position="1"/>
    </location>
</feature>
<feature type="chain" id="PRO_0000133841" description="Enolase">
    <location>
        <begin position="2"/>
        <end position="430"/>
    </location>
</feature>
<feature type="region of interest" description="Sufficient for secretion" evidence="9">
    <location>
        <begin position="1"/>
        <end position="140"/>
    </location>
</feature>
<feature type="active site" description="Proton donor" evidence="2">
    <location>
        <position position="205"/>
    </location>
</feature>
<feature type="active site" description="Proton acceptor" evidence="2">
    <location>
        <position position="339"/>
    </location>
</feature>
<feature type="binding site" evidence="2">
    <location>
        <position position="163"/>
    </location>
    <ligand>
        <name>(2R)-2-phosphoglycerate</name>
        <dbReference type="ChEBI" id="CHEBI:58289"/>
    </ligand>
</feature>
<feature type="binding site" evidence="2">
    <location>
        <position position="242"/>
    </location>
    <ligand>
        <name>Mg(2+)</name>
        <dbReference type="ChEBI" id="CHEBI:18420"/>
    </ligand>
</feature>
<feature type="binding site" evidence="2">
    <location>
        <position position="287"/>
    </location>
    <ligand>
        <name>Mg(2+)</name>
        <dbReference type="ChEBI" id="CHEBI:18420"/>
    </ligand>
</feature>
<feature type="binding site" evidence="2">
    <location>
        <position position="314"/>
    </location>
    <ligand>
        <name>Mg(2+)</name>
        <dbReference type="ChEBI" id="CHEBI:18420"/>
    </ligand>
</feature>
<feature type="binding site" evidence="2">
    <location>
        <position position="339"/>
    </location>
    <ligand>
        <name>(2R)-2-phosphoglycerate</name>
        <dbReference type="ChEBI" id="CHEBI:58289"/>
    </ligand>
</feature>
<feature type="binding site" evidence="2">
    <location>
        <position position="368"/>
    </location>
    <ligand>
        <name>(2R)-2-phosphoglycerate</name>
        <dbReference type="ChEBI" id="CHEBI:58289"/>
    </ligand>
</feature>
<feature type="binding site" evidence="2">
    <location>
        <position position="369"/>
    </location>
    <ligand>
        <name>(2R)-2-phosphoglycerate</name>
        <dbReference type="ChEBI" id="CHEBI:58289"/>
    </ligand>
</feature>
<feature type="binding site" evidence="2">
    <location>
        <position position="390"/>
    </location>
    <ligand>
        <name>(2R)-2-phosphoglycerate</name>
        <dbReference type="ChEBI" id="CHEBI:58289"/>
    </ligand>
</feature>
<feature type="modified residue" description="Phosphothreonine" evidence="4">
    <location>
        <position position="141"/>
    </location>
</feature>
<feature type="modified residue" description="Phosphoserine" evidence="4">
    <location>
        <position position="259"/>
    </location>
</feature>
<feature type="modified residue" description="Phosphotyrosine" evidence="4">
    <location>
        <position position="281"/>
    </location>
</feature>
<feature type="modified residue" description="Phosphoserine" evidence="4">
    <location>
        <position position="325"/>
    </location>
</feature>
<feature type="mutagenesis site" description="Protein is no longer secreted." evidence="7">
    <location>
        <begin position="102"/>
        <end position="126"/>
    </location>
</feature>
<feature type="mutagenesis site" description="Behaves like wild-type, protein is secreted normally." evidence="9">
    <original>KGK</original>
    <variation>GGG</variation>
    <location>
        <begin position="103"/>
        <end position="105"/>
    </location>
</feature>
<feature type="mutagenesis site" description="Protein is not stable." evidence="9">
    <original>AN</original>
    <variation>GG</variation>
    <location>
        <begin position="108"/>
        <end position="109"/>
    </location>
</feature>
<feature type="mutagenesis site" description="Protein is no longer secreted." evidence="7">
    <original>AILGVSMAC</original>
    <variation>EQTMVQDIL</variation>
    <location>
        <begin position="110"/>
        <end position="118"/>
    </location>
</feature>
<feature type="mutagenesis site" description="Protein is not stable." evidence="9">
    <original>AIL</original>
    <variation>GGG</variation>
    <location>
        <begin position="110"/>
        <end position="112"/>
    </location>
</feature>
<feature type="mutagenesis site" description="Protein is stable, no secretion." evidence="9">
    <original>VS</original>
    <variation>GG</variation>
    <location>
        <begin position="114"/>
        <end position="115"/>
    </location>
</feature>
<feature type="mutagenesis site" description="About 10-fold less protein, not secreted." evidence="9">
    <original>MAC</original>
    <variation>GGG</variation>
    <location>
        <begin position="116"/>
        <end position="118"/>
    </location>
</feature>
<feature type="mutagenesis site" description="Expressed 3-4-fold less than wild-type, not secreted." evidence="9">
    <original>ARA</original>
    <variation>GGG</variation>
    <location>
        <begin position="119"/>
        <end position="121"/>
    </location>
</feature>
<feature type="mutagenesis site" description="Expressed 3-4-fold less than wild-type, not secreted." evidence="9">
    <original>AAD</original>
    <variation>GGG</variation>
    <location>
        <begin position="122"/>
        <end position="124"/>
    </location>
</feature>
<feature type="mutagenesis site" description="Behaves like wild-type, protein is secreted normally." evidence="9">
    <original>FLQ</original>
    <variation>GGG</variation>
    <location>
        <begin position="125"/>
        <end position="127"/>
    </location>
</feature>
<feature type="sequence conflict" description="In Ref. 1; AAA21681." evidence="12" ref="1">
    <original>E</original>
    <variation>Q</variation>
    <location>
        <position position="45"/>
    </location>
</feature>
<feature type="strand" evidence="14">
    <location>
        <begin position="3"/>
        <end position="13"/>
    </location>
</feature>
<feature type="strand" evidence="15">
    <location>
        <begin position="15"/>
        <end position="17"/>
    </location>
</feature>
<feature type="strand" evidence="14">
    <location>
        <begin position="19"/>
        <end position="27"/>
    </location>
</feature>
<feature type="strand" evidence="14">
    <location>
        <begin position="32"/>
        <end position="36"/>
    </location>
</feature>
<feature type="strand" evidence="15">
    <location>
        <begin position="45"/>
        <end position="47"/>
    </location>
</feature>
<feature type="helix" evidence="14">
    <location>
        <begin position="59"/>
        <end position="61"/>
    </location>
</feature>
<feature type="helix" evidence="14">
    <location>
        <begin position="65"/>
        <end position="73"/>
    </location>
</feature>
<feature type="helix" evidence="14">
    <location>
        <begin position="75"/>
        <end position="79"/>
    </location>
</feature>
<feature type="helix" evidence="14">
    <location>
        <begin position="87"/>
        <end position="98"/>
    </location>
</feature>
<feature type="strand" evidence="15">
    <location>
        <begin position="100"/>
        <end position="102"/>
    </location>
</feature>
<feature type="turn" evidence="14">
    <location>
        <begin position="104"/>
        <end position="106"/>
    </location>
</feature>
<feature type="helix" evidence="14">
    <location>
        <begin position="108"/>
        <end position="126"/>
    </location>
</feature>
<feature type="helix" evidence="14">
    <location>
        <begin position="130"/>
        <end position="135"/>
    </location>
</feature>
<feature type="strand" evidence="14">
    <location>
        <begin position="147"/>
        <end position="151"/>
    </location>
</feature>
<feature type="helix" evidence="14">
    <location>
        <begin position="153"/>
        <end position="155"/>
    </location>
</feature>
<feature type="strand" evidence="14">
    <location>
        <begin position="157"/>
        <end position="159"/>
    </location>
</feature>
<feature type="strand" evidence="14">
    <location>
        <begin position="162"/>
        <end position="168"/>
    </location>
</feature>
<feature type="helix" evidence="14">
    <location>
        <begin position="175"/>
        <end position="195"/>
    </location>
</feature>
<feature type="strand" evidence="15">
    <location>
        <begin position="204"/>
        <end position="208"/>
    </location>
</feature>
<feature type="helix" evidence="14">
    <location>
        <begin position="215"/>
        <end position="229"/>
    </location>
</feature>
<feature type="turn" evidence="14">
    <location>
        <begin position="234"/>
        <end position="236"/>
    </location>
</feature>
<feature type="strand" evidence="14">
    <location>
        <begin position="237"/>
        <end position="242"/>
    </location>
</feature>
<feature type="helix" evidence="14">
    <location>
        <begin position="245"/>
        <end position="247"/>
    </location>
</feature>
<feature type="turn" evidence="14">
    <location>
        <begin position="251"/>
        <end position="254"/>
    </location>
</feature>
<feature type="strand" evidence="14">
    <location>
        <begin position="255"/>
        <end position="258"/>
    </location>
</feature>
<feature type="turn" evidence="14">
    <location>
        <begin position="259"/>
        <end position="262"/>
    </location>
</feature>
<feature type="strand" evidence="14">
    <location>
        <begin position="263"/>
        <end position="265"/>
    </location>
</feature>
<feature type="helix" evidence="14">
    <location>
        <begin position="267"/>
        <end position="280"/>
    </location>
</feature>
<feature type="strand" evidence="14">
    <location>
        <begin position="283"/>
        <end position="288"/>
    </location>
</feature>
<feature type="helix" evidence="14">
    <location>
        <begin position="295"/>
        <end position="305"/>
    </location>
</feature>
<feature type="turn" evidence="14">
    <location>
        <begin position="306"/>
        <end position="308"/>
    </location>
</feature>
<feature type="strand" evidence="14">
    <location>
        <begin position="309"/>
        <end position="314"/>
    </location>
</feature>
<feature type="turn" evidence="14">
    <location>
        <begin position="315"/>
        <end position="319"/>
    </location>
</feature>
<feature type="helix" evidence="14">
    <location>
        <begin position="321"/>
        <end position="329"/>
    </location>
</feature>
<feature type="strand" evidence="14">
    <location>
        <begin position="334"/>
        <end position="338"/>
    </location>
</feature>
<feature type="helix" evidence="14">
    <location>
        <begin position="340"/>
        <end position="343"/>
    </location>
</feature>
<feature type="helix" evidence="14">
    <location>
        <begin position="346"/>
        <end position="358"/>
    </location>
</feature>
<feature type="strand" evidence="14">
    <location>
        <begin position="362"/>
        <end position="366"/>
    </location>
</feature>
<feature type="helix" evidence="14">
    <location>
        <begin position="376"/>
        <end position="383"/>
    </location>
</feature>
<feature type="strand" evidence="14">
    <location>
        <begin position="388"/>
        <end position="390"/>
    </location>
</feature>
<feature type="helix" evidence="14">
    <location>
        <begin position="397"/>
        <end position="413"/>
    </location>
</feature>
<feature type="helix" evidence="14">
    <location>
        <begin position="414"/>
        <end position="416"/>
    </location>
</feature>
<feature type="helix" evidence="14">
    <location>
        <begin position="421"/>
        <end position="424"/>
    </location>
</feature>
<gene>
    <name evidence="2 11" type="primary">eno</name>
    <name type="ordered locus">BSU33900</name>
</gene>
<organism>
    <name type="scientific">Bacillus subtilis (strain 168)</name>
    <dbReference type="NCBI Taxonomy" id="224308"/>
    <lineage>
        <taxon>Bacteria</taxon>
        <taxon>Bacillati</taxon>
        <taxon>Bacillota</taxon>
        <taxon>Bacilli</taxon>
        <taxon>Bacillales</taxon>
        <taxon>Bacillaceae</taxon>
        <taxon>Bacillus</taxon>
    </lineage>
</organism>